<organism>
    <name type="scientific">Staphylococcus carnosus (strain TM300)</name>
    <dbReference type="NCBI Taxonomy" id="396513"/>
    <lineage>
        <taxon>Bacteria</taxon>
        <taxon>Bacillati</taxon>
        <taxon>Bacillota</taxon>
        <taxon>Bacilli</taxon>
        <taxon>Bacillales</taxon>
        <taxon>Staphylococcaceae</taxon>
        <taxon>Staphylococcus</taxon>
    </lineage>
</organism>
<proteinExistence type="inferred from homology"/>
<name>SECE_STACT</name>
<reference key="1">
    <citation type="journal article" date="1994" name="FEMS Microbiol. Lett.">
        <title>The Staphylococcus carnosus secE gene: cloning, nucleotide sequence, and functional characterization in Escherichia coli secE mutant strains.</title>
        <authorList>
            <person name="Meens J."/>
            <person name="Klose M."/>
            <person name="Freudl R."/>
        </authorList>
    </citation>
    <scope>NUCLEOTIDE SEQUENCE [GENOMIC DNA]</scope>
</reference>
<reference key="2">
    <citation type="journal article" date="2009" name="Appl. Environ. Microbiol.">
        <title>Genome analysis of the meat starter culture bacterium Staphylococcus carnosus TM300.</title>
        <authorList>
            <person name="Rosenstein R."/>
            <person name="Nerz C."/>
            <person name="Biswas L."/>
            <person name="Resch A."/>
            <person name="Raddatz G."/>
            <person name="Schuster S.C."/>
            <person name="Goetz F."/>
        </authorList>
    </citation>
    <scope>NUCLEOTIDE SEQUENCE [LARGE SCALE GENOMIC DNA]</scope>
    <source>
        <strain>TM300</strain>
    </source>
</reference>
<dbReference type="EMBL" id="X76134">
    <property type="protein sequence ID" value="CAA53737.1"/>
    <property type="molecule type" value="Genomic_DNA"/>
</dbReference>
<dbReference type="EMBL" id="AM295250">
    <property type="protein sequence ID" value="CAL27104.1"/>
    <property type="molecule type" value="Genomic_DNA"/>
</dbReference>
<dbReference type="PIR" id="S38869">
    <property type="entry name" value="S38869"/>
</dbReference>
<dbReference type="RefSeq" id="WP_012664219.1">
    <property type="nucleotide sequence ID" value="NC_012121.1"/>
</dbReference>
<dbReference type="SMR" id="P36253"/>
<dbReference type="GeneID" id="93795121"/>
<dbReference type="KEGG" id="sca:SCA_0191"/>
<dbReference type="eggNOG" id="COG0690">
    <property type="taxonomic scope" value="Bacteria"/>
</dbReference>
<dbReference type="HOGENOM" id="CLU_113663_8_2_9"/>
<dbReference type="OrthoDB" id="9813233at2"/>
<dbReference type="BioCyc" id="SCAR396513:SCA_RS00990-MONOMER"/>
<dbReference type="Proteomes" id="UP000000444">
    <property type="component" value="Chromosome"/>
</dbReference>
<dbReference type="GO" id="GO:0005886">
    <property type="term" value="C:plasma membrane"/>
    <property type="evidence" value="ECO:0007669"/>
    <property type="project" value="UniProtKB-SubCell"/>
</dbReference>
<dbReference type="GO" id="GO:0008320">
    <property type="term" value="F:protein transmembrane transporter activity"/>
    <property type="evidence" value="ECO:0007669"/>
    <property type="project" value="UniProtKB-UniRule"/>
</dbReference>
<dbReference type="GO" id="GO:0065002">
    <property type="term" value="P:intracellular protein transmembrane transport"/>
    <property type="evidence" value="ECO:0007669"/>
    <property type="project" value="UniProtKB-UniRule"/>
</dbReference>
<dbReference type="GO" id="GO:0009306">
    <property type="term" value="P:protein secretion"/>
    <property type="evidence" value="ECO:0007669"/>
    <property type="project" value="UniProtKB-UniRule"/>
</dbReference>
<dbReference type="GO" id="GO:0006605">
    <property type="term" value="P:protein targeting"/>
    <property type="evidence" value="ECO:0007669"/>
    <property type="project" value="UniProtKB-UniRule"/>
</dbReference>
<dbReference type="GO" id="GO:0043952">
    <property type="term" value="P:protein transport by the Sec complex"/>
    <property type="evidence" value="ECO:0007669"/>
    <property type="project" value="UniProtKB-UniRule"/>
</dbReference>
<dbReference type="Gene3D" id="1.20.5.1030">
    <property type="entry name" value="Preprotein translocase secy subunit"/>
    <property type="match status" value="1"/>
</dbReference>
<dbReference type="HAMAP" id="MF_00422">
    <property type="entry name" value="SecE"/>
    <property type="match status" value="1"/>
</dbReference>
<dbReference type="InterPro" id="IPR005807">
    <property type="entry name" value="SecE_bac"/>
</dbReference>
<dbReference type="InterPro" id="IPR038379">
    <property type="entry name" value="SecE_sf"/>
</dbReference>
<dbReference type="InterPro" id="IPR001901">
    <property type="entry name" value="Translocase_SecE/Sec61-g"/>
</dbReference>
<dbReference type="NCBIfam" id="TIGR00964">
    <property type="entry name" value="secE_bact"/>
    <property type="match status" value="1"/>
</dbReference>
<dbReference type="PANTHER" id="PTHR33910">
    <property type="entry name" value="PROTEIN TRANSLOCASE SUBUNIT SECE"/>
    <property type="match status" value="1"/>
</dbReference>
<dbReference type="PANTHER" id="PTHR33910:SF1">
    <property type="entry name" value="PROTEIN TRANSLOCASE SUBUNIT SECE"/>
    <property type="match status" value="1"/>
</dbReference>
<dbReference type="Pfam" id="PF00584">
    <property type="entry name" value="SecE"/>
    <property type="match status" value="1"/>
</dbReference>
<dbReference type="PROSITE" id="PS01067">
    <property type="entry name" value="SECE_SEC61G"/>
    <property type="match status" value="1"/>
</dbReference>
<keyword id="KW-1003">Cell membrane</keyword>
<keyword id="KW-0472">Membrane</keyword>
<keyword id="KW-0653">Protein transport</keyword>
<keyword id="KW-1185">Reference proteome</keyword>
<keyword id="KW-0811">Translocation</keyword>
<keyword id="KW-0812">Transmembrane</keyword>
<keyword id="KW-1133">Transmembrane helix</keyword>
<keyword id="KW-0813">Transport</keyword>
<protein>
    <recommendedName>
        <fullName evidence="1">Protein translocase subunit SecE</fullName>
    </recommendedName>
</protein>
<evidence type="ECO:0000255" key="1">
    <source>
        <dbReference type="HAMAP-Rule" id="MF_00422"/>
    </source>
</evidence>
<accession>P36253</accession>
<accession>B9DKW8</accession>
<sequence length="65" mass="7462">MAEDKKKAPKDSFFKGVISEMEKTSWPTKEEILKYTTIVIVTVVFFLIFFYALDLGIGKLIELIS</sequence>
<feature type="chain" id="PRO_0000104180" description="Protein translocase subunit SecE">
    <location>
        <begin position="1"/>
        <end position="65"/>
    </location>
</feature>
<feature type="transmembrane region" description="Helical" evidence="1">
    <location>
        <begin position="38"/>
        <end position="58"/>
    </location>
</feature>
<gene>
    <name evidence="1" type="primary">secE</name>
    <name type="ordered locus">Sca_0191</name>
</gene>
<comment type="function">
    <text evidence="1">Essential subunit of the Sec protein translocation channel SecYEG. Clamps together the 2 halves of SecY. May contact the channel plug during translocation.</text>
</comment>
<comment type="subunit">
    <text evidence="1">Component of the Sec protein translocase complex. Heterotrimer consisting of SecY, SecE and SecG subunits. The heterotrimers can form oligomers, although 1 heterotrimer is thought to be able to translocate proteins. Interacts with the ribosome. Interacts with SecDF, and other proteins may be involved. Interacts with SecA.</text>
</comment>
<comment type="subcellular location">
    <subcellularLocation>
        <location evidence="1">Cell membrane</location>
        <topology evidence="1">Single-pass membrane protein</topology>
    </subcellularLocation>
</comment>
<comment type="similarity">
    <text evidence="1">Belongs to the SecE/SEC61-gamma family.</text>
</comment>